<keyword id="KW-0175">Coiled coil</keyword>
<keyword id="KW-0238">DNA-binding</keyword>
<keyword id="KW-0479">Metal-binding</keyword>
<keyword id="KW-0539">Nucleus</keyword>
<keyword id="KW-1185">Reference proteome</keyword>
<keyword id="KW-0862">Zinc</keyword>
<keyword id="KW-0863">Zinc-finger</keyword>
<reference key="1">
    <citation type="submission" date="2006-09" db="EMBL/GenBank/DDBJ databases">
        <authorList>
            <consortium name="NIH - Xenopus Gene Collection (XGC) project"/>
        </authorList>
    </citation>
    <scope>NUCLEOTIDE SEQUENCE [LARGE SCALE MRNA]</scope>
    <source>
        <tissue>Testis</tissue>
    </source>
</reference>
<evidence type="ECO:0000250" key="1"/>
<evidence type="ECO:0000255" key="2"/>
<evidence type="ECO:0000255" key="3">
    <source>
        <dbReference type="PROSITE-ProRule" id="PRU00309"/>
    </source>
</evidence>
<organism>
    <name type="scientific">Xenopus laevis</name>
    <name type="common">African clawed frog</name>
    <dbReference type="NCBI Taxonomy" id="8355"/>
    <lineage>
        <taxon>Eukaryota</taxon>
        <taxon>Metazoa</taxon>
        <taxon>Chordata</taxon>
        <taxon>Craniata</taxon>
        <taxon>Vertebrata</taxon>
        <taxon>Euteleostomi</taxon>
        <taxon>Amphibia</taxon>
        <taxon>Batrachia</taxon>
        <taxon>Anura</taxon>
        <taxon>Pipoidea</taxon>
        <taxon>Pipidae</taxon>
        <taxon>Xenopodinae</taxon>
        <taxon>Xenopus</taxon>
        <taxon>Xenopus</taxon>
    </lineage>
</organism>
<proteinExistence type="evidence at transcript level"/>
<gene>
    <name type="primary">thap5</name>
</gene>
<comment type="subcellular location">
    <subcellularLocation>
        <location evidence="1">Nucleus</location>
    </subcellularLocation>
</comment>
<feature type="chain" id="PRO_0000333820" description="THAP domain-containing protein 5">
    <location>
        <begin position="1"/>
        <end position="372"/>
    </location>
</feature>
<feature type="zinc finger region" description="THAP-type" evidence="3">
    <location>
        <begin position="1"/>
        <end position="85"/>
    </location>
</feature>
<feature type="coiled-coil region" evidence="2">
    <location>
        <begin position="306"/>
        <end position="362"/>
    </location>
</feature>
<protein>
    <recommendedName>
        <fullName>THAP domain-containing protein 5</fullName>
    </recommendedName>
</protein>
<sequence>MTRYCAATRCKNRGGQAAVIQRKVSFYPFPLHDRGRLQEWLRNMKQYKLYPTKHQVLCSDHFTADSFNIRWGIQYLKPNAIPTLFSFTEKIQDIAELELTIKEGTQDGVKVDTDTVPSQDFCPNVTNNLSHGFDTDEYVDPDDKQVYLKNTIDGITVSQNKTKDLYVPNSEYEIQPHLITPSKFRQTSVENMIVSSVADLNSQSNQVYFELQTDQNYVAENVDTFQVDHFSDVQKETFPLSLVKQTKQMDAEKDSVITIIVPGGQDGSAISDNLQFTSSEKLGFENDANSTNEILESEHSYCRQITDRHYLRQKIAKLQSKIAVLEAQENATLSRLRLLESVIAKLKQENLLSDEKLKILENCGSSVDIVIV</sequence>
<accession>Q0IHI7</accession>
<dbReference type="EMBL" id="BC123138">
    <property type="protein sequence ID" value="AAI23139.1"/>
    <property type="molecule type" value="mRNA"/>
</dbReference>
<dbReference type="RefSeq" id="NP_001090306.1">
    <property type="nucleotide sequence ID" value="NM_001096837.1"/>
</dbReference>
<dbReference type="SMR" id="Q0IHI7"/>
<dbReference type="DNASU" id="779215"/>
<dbReference type="GeneID" id="779215"/>
<dbReference type="KEGG" id="xla:779215"/>
<dbReference type="AGR" id="Xenbase:XB-GENE-6252802"/>
<dbReference type="CTD" id="779215"/>
<dbReference type="Xenbase" id="XB-GENE-6252802">
    <property type="gene designation" value="thap5.S"/>
</dbReference>
<dbReference type="OMA" id="NMKRDAW"/>
<dbReference type="OrthoDB" id="5982876at2759"/>
<dbReference type="Proteomes" id="UP000186698">
    <property type="component" value="Chromosome 3S"/>
</dbReference>
<dbReference type="Bgee" id="779215">
    <property type="expression patterns" value="Expressed in muscle tissue and 19 other cell types or tissues"/>
</dbReference>
<dbReference type="GO" id="GO:0005634">
    <property type="term" value="C:nucleus"/>
    <property type="evidence" value="ECO:0000318"/>
    <property type="project" value="GO_Central"/>
</dbReference>
<dbReference type="GO" id="GO:0003677">
    <property type="term" value="F:DNA binding"/>
    <property type="evidence" value="ECO:0007669"/>
    <property type="project" value="UniProtKB-KW"/>
</dbReference>
<dbReference type="GO" id="GO:0008270">
    <property type="term" value="F:zinc ion binding"/>
    <property type="evidence" value="ECO:0007669"/>
    <property type="project" value="UniProtKB-KW"/>
</dbReference>
<dbReference type="InterPro" id="IPR052224">
    <property type="entry name" value="THAP_domain_protein"/>
</dbReference>
<dbReference type="InterPro" id="IPR006612">
    <property type="entry name" value="THAP_Znf"/>
</dbReference>
<dbReference type="PANTHER" id="PTHR46927">
    <property type="entry name" value="AGAP005574-PA"/>
    <property type="match status" value="1"/>
</dbReference>
<dbReference type="PANTHER" id="PTHR46927:SF1">
    <property type="entry name" value="THAP DOMAIN-CONTAINING PROTEIN 5"/>
    <property type="match status" value="1"/>
</dbReference>
<dbReference type="Pfam" id="PF05485">
    <property type="entry name" value="THAP"/>
    <property type="match status" value="1"/>
</dbReference>
<dbReference type="SMART" id="SM00692">
    <property type="entry name" value="DM3"/>
    <property type="match status" value="1"/>
</dbReference>
<dbReference type="SMART" id="SM00980">
    <property type="entry name" value="THAP"/>
    <property type="match status" value="1"/>
</dbReference>
<dbReference type="SUPFAM" id="SSF57716">
    <property type="entry name" value="Glucocorticoid receptor-like (DNA-binding domain)"/>
    <property type="match status" value="1"/>
</dbReference>
<dbReference type="PROSITE" id="PS50950">
    <property type="entry name" value="ZF_THAP"/>
    <property type="match status" value="1"/>
</dbReference>
<name>THAP5_XENLA</name>